<sequence length="725" mass="80054">MTDFVKCQRLKVAVKLQRFVDEEVLPGTGLEPEAFWKGFDALVHDLAPVNRELLAERERLQGQLDKWHKAHPGPITDMPAYRAFLHSIGYLQPVPEHVAATTANVDLEISEQAGPQLVVPASNARYALNAANARWGSLYDALYGTDVISTSNGAEIRAGYNPLRGAKVIAFARELLDTSAPLANGSHSDANRYRIEDGELRITLADGSQTLLQHPEKYVGFTGEPDQPQAILLKNHGLHIEIQFDPQHPVGKTDAAGIKDLLLESALSTIVDCEDSVAAVDADDKVLVYRNWLGLMKGDLTETLDKGGKAITRSLNPDRVYHAAAGGELTLRGRSLLLIRNVGHLMSNPAIVDQDDKEIPEGILDGVITSLIGLHDLTRHGNSRAGSIYIVKPKMHGAAEVAFADQLFSRIEDVLHLPRNTLKMGIMDEERRTSVNLKACINAASARVAFINTGFLDRTGDEIHSAMQAGPVLRKGEMKNTPWIKAYERNNVQVGLACGLRGRAQIGKGMWAMPDRMADMLEQKIAHPKSGATTAWVPSPTAATLHAWHYHHVDVRQVQEQLEQQSLVDVSDQWLDDLLTIPVVGKPEWTREQILEELENNTQGLLGYVVRWVEQGIGCSKVPDIHNVGLMEDRATLRISSQHMANWLLHDIAGKEDIQNVLERMAKVVDKQNAGDSHYRPMTRDFKNSAAFKAACALVFKGTEQPSGYTEPLLHESRLAFKDAH</sequence>
<organism>
    <name type="scientific">Pseudomonas syringae pv. tomato (strain ATCC BAA-871 / DC3000)</name>
    <dbReference type="NCBI Taxonomy" id="223283"/>
    <lineage>
        <taxon>Bacteria</taxon>
        <taxon>Pseudomonadati</taxon>
        <taxon>Pseudomonadota</taxon>
        <taxon>Gammaproteobacteria</taxon>
        <taxon>Pseudomonadales</taxon>
        <taxon>Pseudomonadaceae</taxon>
        <taxon>Pseudomonas</taxon>
    </lineage>
</organism>
<protein>
    <recommendedName>
        <fullName evidence="1">Malate synthase G 2</fullName>
        <ecNumber evidence="1">2.3.3.9</ecNumber>
    </recommendedName>
</protein>
<comment type="function">
    <text evidence="1">Involved in the glycolate utilization. Catalyzes the condensation and subsequent hydrolysis of acetyl-coenzyme A (acetyl-CoA) and glyoxylate to form malate and CoA.</text>
</comment>
<comment type="catalytic activity">
    <reaction evidence="1">
        <text>glyoxylate + acetyl-CoA + H2O = (S)-malate + CoA + H(+)</text>
        <dbReference type="Rhea" id="RHEA:18181"/>
        <dbReference type="ChEBI" id="CHEBI:15377"/>
        <dbReference type="ChEBI" id="CHEBI:15378"/>
        <dbReference type="ChEBI" id="CHEBI:15589"/>
        <dbReference type="ChEBI" id="CHEBI:36655"/>
        <dbReference type="ChEBI" id="CHEBI:57287"/>
        <dbReference type="ChEBI" id="CHEBI:57288"/>
        <dbReference type="EC" id="2.3.3.9"/>
    </reaction>
</comment>
<comment type="cofactor">
    <cofactor evidence="1">
        <name>Mg(2+)</name>
        <dbReference type="ChEBI" id="CHEBI:18420"/>
    </cofactor>
</comment>
<comment type="pathway">
    <text evidence="1">Carbohydrate metabolism; glyoxylate cycle; (S)-malate from isocitrate: step 2/2.</text>
</comment>
<comment type="subunit">
    <text evidence="1">Monomer.</text>
</comment>
<comment type="subcellular location">
    <subcellularLocation>
        <location evidence="1">Cytoplasm</location>
    </subcellularLocation>
</comment>
<comment type="similarity">
    <text evidence="1">Belongs to the malate synthase family. GlcB subfamily.</text>
</comment>
<reference key="1">
    <citation type="journal article" date="2003" name="Proc. Natl. Acad. Sci. U.S.A.">
        <title>The complete genome sequence of the Arabidopsis and tomato pathogen Pseudomonas syringae pv. tomato DC3000.</title>
        <authorList>
            <person name="Buell C.R."/>
            <person name="Joardar V."/>
            <person name="Lindeberg M."/>
            <person name="Selengut J."/>
            <person name="Paulsen I.T."/>
            <person name="Gwinn M.L."/>
            <person name="Dodson R.J."/>
            <person name="DeBoy R.T."/>
            <person name="Durkin A.S."/>
            <person name="Kolonay J.F."/>
            <person name="Madupu R."/>
            <person name="Daugherty S.C."/>
            <person name="Brinkac L.M."/>
            <person name="Beanan M.J."/>
            <person name="Haft D.H."/>
            <person name="Nelson W.C."/>
            <person name="Davidsen T.M."/>
            <person name="Zafar N."/>
            <person name="Zhou L."/>
            <person name="Liu J."/>
            <person name="Yuan Q."/>
            <person name="Khouri H.M."/>
            <person name="Fedorova N.B."/>
            <person name="Tran B."/>
            <person name="Russell D."/>
            <person name="Berry K.J."/>
            <person name="Utterback T.R."/>
            <person name="Van Aken S.E."/>
            <person name="Feldblyum T.V."/>
            <person name="D'Ascenzo M."/>
            <person name="Deng W.-L."/>
            <person name="Ramos A.R."/>
            <person name="Alfano J.R."/>
            <person name="Cartinhour S."/>
            <person name="Chatterjee A.K."/>
            <person name="Delaney T.P."/>
            <person name="Lazarowitz S.G."/>
            <person name="Martin G.B."/>
            <person name="Schneider D.J."/>
            <person name="Tang X."/>
            <person name="Bender C.L."/>
            <person name="White O."/>
            <person name="Fraser C.M."/>
            <person name="Collmer A."/>
        </authorList>
    </citation>
    <scope>NUCLEOTIDE SEQUENCE [LARGE SCALE GENOMIC DNA]</scope>
    <source>
        <strain>ATCC BAA-871 / DC3000</strain>
    </source>
</reference>
<keyword id="KW-0963">Cytoplasm</keyword>
<keyword id="KW-0329">Glyoxylate bypass</keyword>
<keyword id="KW-0460">Magnesium</keyword>
<keyword id="KW-0479">Metal-binding</keyword>
<keyword id="KW-0558">Oxidation</keyword>
<keyword id="KW-1185">Reference proteome</keyword>
<keyword id="KW-0808">Transferase</keyword>
<keyword id="KW-0816">Tricarboxylic acid cycle</keyword>
<name>MASZ2_PSESM</name>
<gene>
    <name evidence="1" type="primary">glcB2</name>
    <name type="synonym">glcB-2</name>
    <name type="ordered locus">PSPTO_3559</name>
</gene>
<feature type="chain" id="PRO_0000166895" description="Malate synthase G 2">
    <location>
        <begin position="1"/>
        <end position="725"/>
    </location>
</feature>
<feature type="active site" description="Proton acceptor" evidence="1">
    <location>
        <position position="340"/>
    </location>
</feature>
<feature type="active site" description="Proton donor" evidence="1">
    <location>
        <position position="633"/>
    </location>
</feature>
<feature type="binding site" evidence="1">
    <location>
        <position position="118"/>
    </location>
    <ligand>
        <name>acetyl-CoA</name>
        <dbReference type="ChEBI" id="CHEBI:57288"/>
    </ligand>
</feature>
<feature type="binding site" evidence="1">
    <location>
        <begin position="125"/>
        <end position="126"/>
    </location>
    <ligand>
        <name>acetyl-CoA</name>
        <dbReference type="ChEBI" id="CHEBI:57288"/>
    </ligand>
</feature>
<feature type="binding site" evidence="1">
    <location>
        <position position="276"/>
    </location>
    <ligand>
        <name>acetyl-CoA</name>
        <dbReference type="ChEBI" id="CHEBI:57288"/>
    </ligand>
</feature>
<feature type="binding site" evidence="1">
    <location>
        <position position="313"/>
    </location>
    <ligand>
        <name>acetyl-CoA</name>
        <dbReference type="ChEBI" id="CHEBI:57288"/>
    </ligand>
</feature>
<feature type="binding site" evidence="1">
    <location>
        <position position="340"/>
    </location>
    <ligand>
        <name>glyoxylate</name>
        <dbReference type="ChEBI" id="CHEBI:36655"/>
    </ligand>
</feature>
<feature type="binding site" evidence="1">
    <location>
        <position position="429"/>
    </location>
    <ligand>
        <name>glyoxylate</name>
        <dbReference type="ChEBI" id="CHEBI:36655"/>
    </ligand>
</feature>
<feature type="binding site" evidence="1">
    <location>
        <position position="429"/>
    </location>
    <ligand>
        <name>Mg(2+)</name>
        <dbReference type="ChEBI" id="CHEBI:18420"/>
    </ligand>
</feature>
<feature type="binding site" evidence="1">
    <location>
        <begin position="454"/>
        <end position="457"/>
    </location>
    <ligand>
        <name>glyoxylate</name>
        <dbReference type="ChEBI" id="CHEBI:36655"/>
    </ligand>
</feature>
<feature type="binding site" evidence="1">
    <location>
        <position position="457"/>
    </location>
    <ligand>
        <name>Mg(2+)</name>
        <dbReference type="ChEBI" id="CHEBI:18420"/>
    </ligand>
</feature>
<feature type="binding site" evidence="1">
    <location>
        <position position="538"/>
    </location>
    <ligand>
        <name>acetyl-CoA</name>
        <dbReference type="ChEBI" id="CHEBI:57288"/>
    </ligand>
</feature>
<feature type="modified residue" description="Cysteine sulfenic acid (-SOH)" evidence="1">
    <location>
        <position position="619"/>
    </location>
</feature>
<dbReference type="EC" id="2.3.3.9" evidence="1"/>
<dbReference type="EMBL" id="AE016853">
    <property type="protein sequence ID" value="AAO57033.1"/>
    <property type="molecule type" value="Genomic_DNA"/>
</dbReference>
<dbReference type="RefSeq" id="NP_793338.1">
    <property type="nucleotide sequence ID" value="NC_004578.1"/>
</dbReference>
<dbReference type="RefSeq" id="WP_005765147.1">
    <property type="nucleotide sequence ID" value="NC_004578.1"/>
</dbReference>
<dbReference type="SMR" id="Q87Z72"/>
<dbReference type="STRING" id="223283.PSPTO_3559"/>
<dbReference type="GeneID" id="1185224"/>
<dbReference type="KEGG" id="pst:PSPTO_3559"/>
<dbReference type="PATRIC" id="fig|223283.9.peg.3649"/>
<dbReference type="eggNOG" id="COG2225">
    <property type="taxonomic scope" value="Bacteria"/>
</dbReference>
<dbReference type="HOGENOM" id="CLU_028446_1_0_6"/>
<dbReference type="OrthoDB" id="9762054at2"/>
<dbReference type="PhylomeDB" id="Q87Z72"/>
<dbReference type="UniPathway" id="UPA00703">
    <property type="reaction ID" value="UER00720"/>
</dbReference>
<dbReference type="Proteomes" id="UP000002515">
    <property type="component" value="Chromosome"/>
</dbReference>
<dbReference type="GO" id="GO:0005829">
    <property type="term" value="C:cytosol"/>
    <property type="evidence" value="ECO:0007669"/>
    <property type="project" value="TreeGrafter"/>
</dbReference>
<dbReference type="GO" id="GO:0000287">
    <property type="term" value="F:magnesium ion binding"/>
    <property type="evidence" value="ECO:0007669"/>
    <property type="project" value="TreeGrafter"/>
</dbReference>
<dbReference type="GO" id="GO:0004474">
    <property type="term" value="F:malate synthase activity"/>
    <property type="evidence" value="ECO:0007669"/>
    <property type="project" value="UniProtKB-UniRule"/>
</dbReference>
<dbReference type="GO" id="GO:0009436">
    <property type="term" value="P:glyoxylate catabolic process"/>
    <property type="evidence" value="ECO:0007669"/>
    <property type="project" value="TreeGrafter"/>
</dbReference>
<dbReference type="GO" id="GO:0006097">
    <property type="term" value="P:glyoxylate cycle"/>
    <property type="evidence" value="ECO:0007669"/>
    <property type="project" value="UniProtKB-UniRule"/>
</dbReference>
<dbReference type="GO" id="GO:0006099">
    <property type="term" value="P:tricarboxylic acid cycle"/>
    <property type="evidence" value="ECO:0007669"/>
    <property type="project" value="UniProtKB-KW"/>
</dbReference>
<dbReference type="FunFam" id="3.20.20.360:FF:000002">
    <property type="entry name" value="Malate synthase G"/>
    <property type="match status" value="1"/>
</dbReference>
<dbReference type="Gene3D" id="3.20.20.360">
    <property type="entry name" value="Malate synthase, domain 3"/>
    <property type="match status" value="2"/>
</dbReference>
<dbReference type="Gene3D" id="1.20.1220.12">
    <property type="entry name" value="Malate synthase, domain III"/>
    <property type="match status" value="1"/>
</dbReference>
<dbReference type="HAMAP" id="MF_00641">
    <property type="entry name" value="Malate_synth_G"/>
    <property type="match status" value="1"/>
</dbReference>
<dbReference type="InterPro" id="IPR044856">
    <property type="entry name" value="Malate_synth_C_sf"/>
</dbReference>
<dbReference type="InterPro" id="IPR011076">
    <property type="entry name" value="Malate_synth_sf"/>
</dbReference>
<dbReference type="InterPro" id="IPR001465">
    <property type="entry name" value="Malate_synthase_TIM"/>
</dbReference>
<dbReference type="InterPro" id="IPR006253">
    <property type="entry name" value="Malate_synthG"/>
</dbReference>
<dbReference type="InterPro" id="IPR048355">
    <property type="entry name" value="MS_C"/>
</dbReference>
<dbReference type="InterPro" id="IPR048356">
    <property type="entry name" value="MS_N"/>
</dbReference>
<dbReference type="InterPro" id="IPR046363">
    <property type="entry name" value="MS_N_TIM-barrel_dom"/>
</dbReference>
<dbReference type="InterPro" id="IPR048357">
    <property type="entry name" value="MSG_insertion"/>
</dbReference>
<dbReference type="NCBIfam" id="TIGR01345">
    <property type="entry name" value="malate_syn_G"/>
    <property type="match status" value="1"/>
</dbReference>
<dbReference type="NCBIfam" id="NF002825">
    <property type="entry name" value="PRK02999.1"/>
    <property type="match status" value="1"/>
</dbReference>
<dbReference type="PANTHER" id="PTHR42739">
    <property type="entry name" value="MALATE SYNTHASE G"/>
    <property type="match status" value="1"/>
</dbReference>
<dbReference type="PANTHER" id="PTHR42739:SF1">
    <property type="entry name" value="MALATE SYNTHASE G"/>
    <property type="match status" value="1"/>
</dbReference>
<dbReference type="Pfam" id="PF20659">
    <property type="entry name" value="MS_C"/>
    <property type="match status" value="1"/>
</dbReference>
<dbReference type="Pfam" id="PF20656">
    <property type="entry name" value="MS_N"/>
    <property type="match status" value="1"/>
</dbReference>
<dbReference type="Pfam" id="PF01274">
    <property type="entry name" value="MS_TIM-barrel"/>
    <property type="match status" value="1"/>
</dbReference>
<dbReference type="Pfam" id="PF20658">
    <property type="entry name" value="MSG_insertion"/>
    <property type="match status" value="1"/>
</dbReference>
<dbReference type="SUPFAM" id="SSF51645">
    <property type="entry name" value="Malate synthase G"/>
    <property type="match status" value="1"/>
</dbReference>
<accession>Q87Z72</accession>
<evidence type="ECO:0000255" key="1">
    <source>
        <dbReference type="HAMAP-Rule" id="MF_00641"/>
    </source>
</evidence>
<proteinExistence type="inferred from homology"/>